<name>LPFC2_ECO57</name>
<organism>
    <name type="scientific">Escherichia coli O157:H7</name>
    <dbReference type="NCBI Taxonomy" id="83334"/>
    <lineage>
        <taxon>Bacteria</taxon>
        <taxon>Pseudomonadati</taxon>
        <taxon>Pseudomonadota</taxon>
        <taxon>Gammaproteobacteria</taxon>
        <taxon>Enterobacterales</taxon>
        <taxon>Enterobacteriaceae</taxon>
        <taxon>Escherichia</taxon>
    </lineage>
</organism>
<gene>
    <name type="primary">lpfC'</name>
    <name type="ordered locus">Z4967</name>
    <name type="ordered locus">ECs4428</name>
</gene>
<protein>
    <recommendedName>
        <fullName>Probable outer membrane usher protein LpfC'</fullName>
    </recommendedName>
</protein>
<keyword id="KW-0998">Cell outer membrane</keyword>
<keyword id="KW-1029">Fimbrium biogenesis</keyword>
<keyword id="KW-0472">Membrane</keyword>
<keyword id="KW-1185">Reference proteome</keyword>
<keyword id="KW-0812">Transmembrane</keyword>
<keyword id="KW-0813">Transport</keyword>
<sequence length="485" mass="53236">MPIFQREGHLKYSFAAGEYQAGNYDSASPRFGQLDLIYGLPWGMTAYGGVLISNNYNAFTLGIGKNFGYIGAISIDVTQAKSELNNDRDSQGQSYRFLYSKSFESGTDFRLAGYRYSTSGFYTFQEATDVRSDADSDYNRYHKRSEIQGNLTQQLGAYGSVYLNLTQQDYWNDAGKQNTVSAGYNGRIGKVSYSIAYSWNKSPEWDESDRLWSFNISVPLGRAWSNYRVTTDQDGRTNQQVGVSGTLLEDRNLSYSVQEGYASNGVGNSGNANVGYQGGSGNVNVGYSYGKDYRQLNYSVRGGVIVHSEGVTLSQPLGETMTLISVPGARNARVVNNGGVQVDWMGNAIVPYAMPYRENEISLRSDSLGDDVDVENAFQKVVPTRGAIVRARFDTRVGYRVLMTLLRSAGSPVPFGATATLITDKQNEVSSIVGEEGQLYISGMPEEGRVLIKWGNDASQQCVAPYKLSLELKQGGIIPVSANCQ</sequence>
<dbReference type="EMBL" id="AE005174">
    <property type="protein sequence ID" value="AAG58692.1"/>
    <property type="molecule type" value="Genomic_DNA"/>
</dbReference>
<dbReference type="EMBL" id="BA000007">
    <property type="protein sequence ID" value="BAB37851.1"/>
    <property type="molecule type" value="Genomic_DNA"/>
</dbReference>
<dbReference type="PIR" id="D91182">
    <property type="entry name" value="D91182"/>
</dbReference>
<dbReference type="PIR" id="H86028">
    <property type="entry name" value="H86028"/>
</dbReference>
<dbReference type="SMR" id="Q8X5K8"/>
<dbReference type="STRING" id="155864.Z4967"/>
<dbReference type="KEGG" id="ece:Z4967"/>
<dbReference type="HOGENOM" id="CLU_009120_3_2_6"/>
<dbReference type="Proteomes" id="UP000000558">
    <property type="component" value="Chromosome"/>
</dbReference>
<dbReference type="Proteomes" id="UP000002519">
    <property type="component" value="Chromosome"/>
</dbReference>
<dbReference type="GO" id="GO:0009279">
    <property type="term" value="C:cell outer membrane"/>
    <property type="evidence" value="ECO:0007669"/>
    <property type="project" value="UniProtKB-SubCell"/>
</dbReference>
<dbReference type="GO" id="GO:0015473">
    <property type="term" value="F:fimbrial usher porin activity"/>
    <property type="evidence" value="ECO:0007669"/>
    <property type="project" value="InterPro"/>
</dbReference>
<dbReference type="GO" id="GO:0009297">
    <property type="term" value="P:pilus assembly"/>
    <property type="evidence" value="ECO:0007669"/>
    <property type="project" value="InterPro"/>
</dbReference>
<dbReference type="FunFam" id="2.60.40.2610:FF:000001">
    <property type="entry name" value="Outer membrane fimbrial usher protein"/>
    <property type="match status" value="1"/>
</dbReference>
<dbReference type="Gene3D" id="2.60.40.2070">
    <property type="match status" value="1"/>
</dbReference>
<dbReference type="Gene3D" id="2.60.40.2610">
    <property type="entry name" value="Outer membrane usher protein FimD, plug domain"/>
    <property type="match status" value="1"/>
</dbReference>
<dbReference type="InterPro" id="IPR000015">
    <property type="entry name" value="Fimb_usher"/>
</dbReference>
<dbReference type="InterPro" id="IPR042186">
    <property type="entry name" value="FimD_plug_dom"/>
</dbReference>
<dbReference type="InterPro" id="IPR025949">
    <property type="entry name" value="PapC-like_C"/>
</dbReference>
<dbReference type="InterPro" id="IPR043142">
    <property type="entry name" value="PapC-like_C_sf"/>
</dbReference>
<dbReference type="PANTHER" id="PTHR30451:SF21">
    <property type="entry name" value="FIMBRIAL USHER DOMAIN-CONTAINING PROTEIN YDET-RELATED"/>
    <property type="match status" value="1"/>
</dbReference>
<dbReference type="PANTHER" id="PTHR30451">
    <property type="entry name" value="OUTER MEMBRANE USHER PROTEIN"/>
    <property type="match status" value="1"/>
</dbReference>
<dbReference type="Pfam" id="PF13953">
    <property type="entry name" value="PapC_C"/>
    <property type="match status" value="1"/>
</dbReference>
<dbReference type="Pfam" id="PF00577">
    <property type="entry name" value="Usher"/>
    <property type="match status" value="1"/>
</dbReference>
<feature type="chain" id="PRO_0000429486" description="Probable outer membrane usher protein LpfC'">
    <location>
        <begin position="1"/>
        <end position="485"/>
    </location>
</feature>
<proteinExistence type="evidence at transcript level"/>
<comment type="function">
    <text evidence="2">Part of the lpfABCC'DE fimbrial operon. LP fimbriae may participate in the interaction with eukaryotic cells by assisting in microcolony formation. Could be involved in the export and assembly of the fimbrial subunits across the outer membrane.</text>
</comment>
<comment type="subcellular location">
    <subcellularLocation>
        <location evidence="1">Cell outer membrane</location>
        <topology evidence="1">Multi-pass membrane protein</topology>
    </subcellularLocation>
</comment>
<comment type="induction">
    <text evidence="2">Induced during the exponential growth phase.</text>
</comment>
<comment type="similarity">
    <text evidence="3">Belongs to the fimbrial export usher family.</text>
</comment>
<accession>Q8X5K8</accession>
<accession>Q7A9Y8</accession>
<evidence type="ECO:0000250" key="1"/>
<evidence type="ECO:0000269" key="2">
    <source>
    </source>
</evidence>
<evidence type="ECO:0000305" key="3"/>
<reference key="1">
    <citation type="journal article" date="2001" name="DNA Res.">
        <title>Complete genome sequence of enterohemorrhagic Escherichia coli O157:H7 and genomic comparison with a laboratory strain K-12.</title>
        <authorList>
            <person name="Hayashi T."/>
            <person name="Makino K."/>
            <person name="Ohnishi M."/>
            <person name="Kurokawa K."/>
            <person name="Ishii K."/>
            <person name="Yokoyama K."/>
            <person name="Han C.-G."/>
            <person name="Ohtsubo E."/>
            <person name="Nakayama K."/>
            <person name="Murata T."/>
            <person name="Tanaka M."/>
            <person name="Tobe T."/>
            <person name="Iida T."/>
            <person name="Takami H."/>
            <person name="Honda T."/>
            <person name="Sasakawa C."/>
            <person name="Ogasawara N."/>
            <person name="Yasunaga T."/>
            <person name="Kuhara S."/>
            <person name="Shiba T."/>
            <person name="Hattori M."/>
            <person name="Shinagawa H."/>
        </authorList>
    </citation>
    <scope>NUCLEOTIDE SEQUENCE [LARGE SCALE GENOMIC DNA]</scope>
    <source>
        <strain>O157:H7 / Sakai / RIMD 0509952 / EHEC</strain>
    </source>
</reference>
<reference key="2">
    <citation type="journal article" date="2001" name="Nature">
        <title>Genome sequence of enterohaemorrhagic Escherichia coli O157:H7.</title>
        <authorList>
            <person name="Perna N.T."/>
            <person name="Plunkett G. III"/>
            <person name="Burland V."/>
            <person name="Mau B."/>
            <person name="Glasner J.D."/>
            <person name="Rose D.J."/>
            <person name="Mayhew G.F."/>
            <person name="Evans P.S."/>
            <person name="Gregor J."/>
            <person name="Kirkpatrick H.A."/>
            <person name="Posfai G."/>
            <person name="Hackett J."/>
            <person name="Klink S."/>
            <person name="Boutin A."/>
            <person name="Shao Y."/>
            <person name="Miller L."/>
            <person name="Grotbeck E.J."/>
            <person name="Davis N.W."/>
            <person name="Lim A."/>
            <person name="Dimalanta E.T."/>
            <person name="Potamousis K."/>
            <person name="Apodaca J."/>
            <person name="Anantharaman T.S."/>
            <person name="Lin J."/>
            <person name="Yen G."/>
            <person name="Schwartz D.C."/>
            <person name="Welch R.A."/>
            <person name="Blattner F.R."/>
        </authorList>
    </citation>
    <scope>NUCLEOTIDE SEQUENCE [LARGE SCALE GENOMIC DNA]</scope>
    <source>
        <strain>O157:H7 / EDL933 / ATCC 700927 / EHEC</strain>
    </source>
</reference>
<reference key="3">
    <citation type="journal article" date="2002" name="Infect. Immun.">
        <title>Identification and characterization of lpfABCC'DE, a fimbrial operon of enterohemorrhagic Escherichia coli O157:H7.</title>
        <authorList>
            <person name="Torres A.G."/>
            <person name="Giron J.A."/>
            <person name="Perna N.T."/>
            <person name="Burland V."/>
            <person name="Blattner F.R."/>
            <person name="Avelino-Flores F."/>
            <person name="Kaper J.B."/>
        </authorList>
    </citation>
    <scope>FUNCTION</scope>
    <scope>INDUCTION</scope>
    <scope>GENE NAME</scope>
    <source>
        <strain>O157:H7 / EDL933 / ATCC 700927 / EHEC</strain>
    </source>
</reference>